<organism>
    <name type="scientific">Homo sapiens</name>
    <name type="common">Human</name>
    <dbReference type="NCBI Taxonomy" id="9606"/>
    <lineage>
        <taxon>Eukaryota</taxon>
        <taxon>Metazoa</taxon>
        <taxon>Chordata</taxon>
        <taxon>Craniata</taxon>
        <taxon>Vertebrata</taxon>
        <taxon>Euteleostomi</taxon>
        <taxon>Mammalia</taxon>
        <taxon>Eutheria</taxon>
        <taxon>Euarchontoglires</taxon>
        <taxon>Primates</taxon>
        <taxon>Haplorrhini</taxon>
        <taxon>Catarrhini</taxon>
        <taxon>Hominidae</taxon>
        <taxon>Homo</taxon>
    </lineage>
</organism>
<keyword id="KW-0143">Chaperone</keyword>
<keyword id="KW-1185">Reference proteome</keyword>
<dbReference type="EMBL" id="AF085232">
    <property type="protein sequence ID" value="AAL40391.1"/>
    <property type="molecule type" value="mRNA"/>
</dbReference>
<dbReference type="EMBL" id="CR456468">
    <property type="protein sequence ID" value="CAG30354.1"/>
    <property type="molecule type" value="mRNA"/>
</dbReference>
<dbReference type="EMBL" id="Z98048">
    <property type="status" value="NOT_ANNOTATED_CDS"/>
    <property type="molecule type" value="Genomic_DNA"/>
</dbReference>
<dbReference type="EMBL" id="BC112135">
    <property type="protein sequence ID" value="AAI12136.1"/>
    <property type="molecule type" value="mRNA"/>
</dbReference>
<dbReference type="CCDS" id="CCDS14008.1"/>
<dbReference type="RefSeq" id="NP_660157.1">
    <property type="nucleotide sequence ID" value="NM_145174.2"/>
</dbReference>
<dbReference type="SMR" id="Q7Z6W7"/>
<dbReference type="BioGRID" id="127284">
    <property type="interactions" value="34"/>
</dbReference>
<dbReference type="FunCoup" id="Q7Z6W7">
    <property type="interactions" value="89"/>
</dbReference>
<dbReference type="IntAct" id="Q7Z6W7">
    <property type="interactions" value="4"/>
</dbReference>
<dbReference type="STRING" id="9606.ENSP00000307197"/>
<dbReference type="iPTMnet" id="Q7Z6W7"/>
<dbReference type="PhosphoSitePlus" id="Q7Z6W7"/>
<dbReference type="BioMuta" id="DNAJB7"/>
<dbReference type="DMDM" id="44887848"/>
<dbReference type="jPOST" id="Q7Z6W7"/>
<dbReference type="MassIVE" id="Q7Z6W7"/>
<dbReference type="PaxDb" id="9606-ENSP00000307197"/>
<dbReference type="PeptideAtlas" id="Q7Z6W7"/>
<dbReference type="ProteomicsDB" id="69469"/>
<dbReference type="Pumba" id="Q7Z6W7"/>
<dbReference type="Antibodypedia" id="256">
    <property type="antibodies" value="39 antibodies from 18 providers"/>
</dbReference>
<dbReference type="DNASU" id="150353"/>
<dbReference type="Ensembl" id="ENST00000307221.5">
    <property type="protein sequence ID" value="ENSP00000307197.4"/>
    <property type="gene ID" value="ENSG00000172404.5"/>
</dbReference>
<dbReference type="GeneID" id="150353"/>
<dbReference type="KEGG" id="hsa:150353"/>
<dbReference type="MANE-Select" id="ENST00000307221.5">
    <property type="protein sequence ID" value="ENSP00000307197.4"/>
    <property type="RefSeq nucleotide sequence ID" value="NM_145174.2"/>
    <property type="RefSeq protein sequence ID" value="NP_660157.1"/>
</dbReference>
<dbReference type="UCSC" id="uc003azj.4">
    <property type="organism name" value="human"/>
</dbReference>
<dbReference type="AGR" id="HGNC:24986"/>
<dbReference type="CTD" id="150353"/>
<dbReference type="DisGeNET" id="150353"/>
<dbReference type="GeneCards" id="DNAJB7"/>
<dbReference type="HGNC" id="HGNC:24986">
    <property type="gene designation" value="DNAJB7"/>
</dbReference>
<dbReference type="HPA" id="ENSG00000172404">
    <property type="expression patterns" value="Tissue enriched (testis)"/>
</dbReference>
<dbReference type="MalaCards" id="DNAJB7"/>
<dbReference type="MIM" id="611336">
    <property type="type" value="gene"/>
</dbReference>
<dbReference type="neXtProt" id="NX_Q7Z6W7"/>
<dbReference type="OpenTargets" id="ENSG00000172404"/>
<dbReference type="PharmGKB" id="PA134961522"/>
<dbReference type="VEuPathDB" id="HostDB:ENSG00000172404"/>
<dbReference type="eggNOG" id="KOG0714">
    <property type="taxonomic scope" value="Eukaryota"/>
</dbReference>
<dbReference type="GeneTree" id="ENSGT00940000163470"/>
<dbReference type="HOGENOM" id="CLU_017633_12_0_1"/>
<dbReference type="InParanoid" id="Q7Z6W7"/>
<dbReference type="OMA" id="QYTFVDN"/>
<dbReference type="OrthoDB" id="10250354at2759"/>
<dbReference type="PAN-GO" id="Q7Z6W7">
    <property type="GO annotations" value="6 GO annotations based on evolutionary models"/>
</dbReference>
<dbReference type="PhylomeDB" id="Q7Z6W7"/>
<dbReference type="TreeFam" id="TF105142"/>
<dbReference type="PathwayCommons" id="Q7Z6W7"/>
<dbReference type="SignaLink" id="Q7Z6W7"/>
<dbReference type="BioGRID-ORCS" id="150353">
    <property type="hits" value="9 hits in 1136 CRISPR screens"/>
</dbReference>
<dbReference type="GenomeRNAi" id="150353"/>
<dbReference type="Pharos" id="Q7Z6W7">
    <property type="development level" value="Tbio"/>
</dbReference>
<dbReference type="PRO" id="PR:Q7Z6W7"/>
<dbReference type="Proteomes" id="UP000005640">
    <property type="component" value="Chromosome 22"/>
</dbReference>
<dbReference type="RNAct" id="Q7Z6W7">
    <property type="molecule type" value="protein"/>
</dbReference>
<dbReference type="Bgee" id="ENSG00000172404">
    <property type="expression patterns" value="Expressed in male germ line stem cell (sensu Vertebrata) in testis and 81 other cell types or tissues"/>
</dbReference>
<dbReference type="GO" id="GO:0005737">
    <property type="term" value="C:cytoplasm"/>
    <property type="evidence" value="ECO:0000318"/>
    <property type="project" value="GO_Central"/>
</dbReference>
<dbReference type="GO" id="GO:0005634">
    <property type="term" value="C:nucleus"/>
    <property type="evidence" value="ECO:0000318"/>
    <property type="project" value="GO_Central"/>
</dbReference>
<dbReference type="GO" id="GO:0030544">
    <property type="term" value="F:Hsp70 protein binding"/>
    <property type="evidence" value="ECO:0007669"/>
    <property type="project" value="InterPro"/>
</dbReference>
<dbReference type="GO" id="GO:0044183">
    <property type="term" value="F:protein folding chaperone"/>
    <property type="evidence" value="ECO:0000318"/>
    <property type="project" value="GO_Central"/>
</dbReference>
<dbReference type="GO" id="GO:0051087">
    <property type="term" value="F:protein-folding chaperone binding"/>
    <property type="evidence" value="ECO:0000353"/>
    <property type="project" value="UniProtKB"/>
</dbReference>
<dbReference type="GO" id="GO:0051082">
    <property type="term" value="F:unfolded protein binding"/>
    <property type="evidence" value="ECO:0000318"/>
    <property type="project" value="GO_Central"/>
</dbReference>
<dbReference type="GO" id="GO:0061077">
    <property type="term" value="P:chaperone-mediated protein folding"/>
    <property type="evidence" value="ECO:0000318"/>
    <property type="project" value="GO_Central"/>
</dbReference>
<dbReference type="CDD" id="cd06257">
    <property type="entry name" value="DnaJ"/>
    <property type="match status" value="1"/>
</dbReference>
<dbReference type="FunFam" id="1.10.287.110:FF:000022">
    <property type="entry name" value="DnaJ homolog subfamily B member 6"/>
    <property type="match status" value="1"/>
</dbReference>
<dbReference type="Gene3D" id="1.10.287.110">
    <property type="entry name" value="DnaJ domain"/>
    <property type="match status" value="1"/>
</dbReference>
<dbReference type="InterPro" id="IPR001623">
    <property type="entry name" value="DnaJ_domain"/>
</dbReference>
<dbReference type="InterPro" id="IPR018253">
    <property type="entry name" value="DnaJ_domain_CS"/>
</dbReference>
<dbReference type="InterPro" id="IPR043183">
    <property type="entry name" value="DNJB2/6-like"/>
</dbReference>
<dbReference type="InterPro" id="IPR036869">
    <property type="entry name" value="J_dom_sf"/>
</dbReference>
<dbReference type="PANTHER" id="PTHR45168">
    <property type="entry name" value="DNAJ HOMOLOG SUBFAMILY B MEMBER 2"/>
    <property type="match status" value="1"/>
</dbReference>
<dbReference type="PANTHER" id="PTHR45168:SF4">
    <property type="entry name" value="SIMILAR TO DNAJ HOMOLOG SUBFAMILY B MEMBER 6 (HEAT SHOCK PROTEIN J2) (HSJ-2) (MRJ) (MDJ4)"/>
    <property type="match status" value="1"/>
</dbReference>
<dbReference type="Pfam" id="PF00226">
    <property type="entry name" value="DnaJ"/>
    <property type="match status" value="1"/>
</dbReference>
<dbReference type="PRINTS" id="PR00625">
    <property type="entry name" value="JDOMAIN"/>
</dbReference>
<dbReference type="SMART" id="SM00271">
    <property type="entry name" value="DnaJ"/>
    <property type="match status" value="1"/>
</dbReference>
<dbReference type="SUPFAM" id="SSF46565">
    <property type="entry name" value="Chaperone J-domain"/>
    <property type="match status" value="1"/>
</dbReference>
<dbReference type="PROSITE" id="PS00636">
    <property type="entry name" value="DNAJ_1"/>
    <property type="match status" value="1"/>
</dbReference>
<dbReference type="PROSITE" id="PS50076">
    <property type="entry name" value="DNAJ_2"/>
    <property type="match status" value="1"/>
</dbReference>
<reference key="1">
    <citation type="submission" date="1998-08" db="EMBL/GenBank/DDBJ databases">
        <title>Cloning a novel human gene, HSC3, which shows significant homology to murine MRJ.</title>
        <authorList>
            <person name="Xing Y."/>
            <person name="Yu L."/>
            <person name="Fu Q."/>
            <person name="Zhao Y."/>
            <person name="Bi A."/>
            <person name="Zhao S."/>
        </authorList>
    </citation>
    <scope>NUCLEOTIDE SEQUENCE [MRNA]</scope>
</reference>
<reference key="2">
    <citation type="journal article" date="2004" name="Genome Biol.">
        <title>A genome annotation-driven approach to cloning the human ORFeome.</title>
        <authorList>
            <person name="Collins J.E."/>
            <person name="Wright C.L."/>
            <person name="Edwards C.A."/>
            <person name="Davis M.P."/>
            <person name="Grinham J.A."/>
            <person name="Cole C.G."/>
            <person name="Goward M.E."/>
            <person name="Aguado B."/>
            <person name="Mallya M."/>
            <person name="Mokrab Y."/>
            <person name="Huckle E.J."/>
            <person name="Beare D.M."/>
            <person name="Dunham I."/>
        </authorList>
    </citation>
    <scope>NUCLEOTIDE SEQUENCE [LARGE SCALE MRNA]</scope>
</reference>
<reference key="3">
    <citation type="journal article" date="1999" name="Nature">
        <title>The DNA sequence of human chromosome 22.</title>
        <authorList>
            <person name="Dunham I."/>
            <person name="Hunt A.R."/>
            <person name="Collins J.E."/>
            <person name="Bruskiewich R."/>
            <person name="Beare D.M."/>
            <person name="Clamp M."/>
            <person name="Smink L.J."/>
            <person name="Ainscough R."/>
            <person name="Almeida J.P."/>
            <person name="Babbage A.K."/>
            <person name="Bagguley C."/>
            <person name="Bailey J."/>
            <person name="Barlow K.F."/>
            <person name="Bates K.N."/>
            <person name="Beasley O.P."/>
            <person name="Bird C.P."/>
            <person name="Blakey S.E."/>
            <person name="Bridgeman A.M."/>
            <person name="Buck D."/>
            <person name="Burgess J."/>
            <person name="Burrill W.D."/>
            <person name="Burton J."/>
            <person name="Carder C."/>
            <person name="Carter N.P."/>
            <person name="Chen Y."/>
            <person name="Clark G."/>
            <person name="Clegg S.M."/>
            <person name="Cobley V.E."/>
            <person name="Cole C.G."/>
            <person name="Collier R.E."/>
            <person name="Connor R."/>
            <person name="Conroy D."/>
            <person name="Corby N.R."/>
            <person name="Coville G.J."/>
            <person name="Cox A.V."/>
            <person name="Davis J."/>
            <person name="Dawson E."/>
            <person name="Dhami P.D."/>
            <person name="Dockree C."/>
            <person name="Dodsworth S.J."/>
            <person name="Durbin R.M."/>
            <person name="Ellington A.G."/>
            <person name="Evans K.L."/>
            <person name="Fey J.M."/>
            <person name="Fleming K."/>
            <person name="French L."/>
            <person name="Garner A.A."/>
            <person name="Gilbert J.G.R."/>
            <person name="Goward M.E."/>
            <person name="Grafham D.V."/>
            <person name="Griffiths M.N.D."/>
            <person name="Hall C."/>
            <person name="Hall R.E."/>
            <person name="Hall-Tamlyn G."/>
            <person name="Heathcott R.W."/>
            <person name="Ho S."/>
            <person name="Holmes S."/>
            <person name="Hunt S.E."/>
            <person name="Jones M.C."/>
            <person name="Kershaw J."/>
            <person name="Kimberley A.M."/>
            <person name="King A."/>
            <person name="Laird G.K."/>
            <person name="Langford C.F."/>
            <person name="Leversha M.A."/>
            <person name="Lloyd C."/>
            <person name="Lloyd D.M."/>
            <person name="Martyn I.D."/>
            <person name="Mashreghi-Mohammadi M."/>
            <person name="Matthews L.H."/>
            <person name="Mccann O.T."/>
            <person name="Mcclay J."/>
            <person name="Mclaren S."/>
            <person name="McMurray A.A."/>
            <person name="Milne S.A."/>
            <person name="Mortimore B.J."/>
            <person name="Odell C.N."/>
            <person name="Pavitt R."/>
            <person name="Pearce A.V."/>
            <person name="Pearson D."/>
            <person name="Phillimore B.J.C.T."/>
            <person name="Phillips S.H."/>
            <person name="Plumb R.W."/>
            <person name="Ramsay H."/>
            <person name="Ramsey Y."/>
            <person name="Rogers L."/>
            <person name="Ross M.T."/>
            <person name="Scott C.E."/>
            <person name="Sehra H.K."/>
            <person name="Skuce C.D."/>
            <person name="Smalley S."/>
            <person name="Smith M.L."/>
            <person name="Soderlund C."/>
            <person name="Spragon L."/>
            <person name="Steward C.A."/>
            <person name="Sulston J.E."/>
            <person name="Swann R.M."/>
            <person name="Vaudin M."/>
            <person name="Wall M."/>
            <person name="Wallis J.M."/>
            <person name="Whiteley M.N."/>
            <person name="Willey D.L."/>
            <person name="Williams L."/>
            <person name="Williams S.A."/>
            <person name="Williamson H."/>
            <person name="Wilmer T.E."/>
            <person name="Wilming L."/>
            <person name="Wright C.L."/>
            <person name="Hubbard T."/>
            <person name="Bentley D.R."/>
            <person name="Beck S."/>
            <person name="Rogers J."/>
            <person name="Shimizu N."/>
            <person name="Minoshima S."/>
            <person name="Kawasaki K."/>
            <person name="Sasaki T."/>
            <person name="Asakawa S."/>
            <person name="Kudoh J."/>
            <person name="Shintani A."/>
            <person name="Shibuya K."/>
            <person name="Yoshizaki Y."/>
            <person name="Aoki N."/>
            <person name="Mitsuyama S."/>
            <person name="Roe B.A."/>
            <person name="Chen F."/>
            <person name="Chu L."/>
            <person name="Crabtree J."/>
            <person name="Deschamps S."/>
            <person name="Do A."/>
            <person name="Do T."/>
            <person name="Dorman A."/>
            <person name="Fang F."/>
            <person name="Fu Y."/>
            <person name="Hu P."/>
            <person name="Hua A."/>
            <person name="Kenton S."/>
            <person name="Lai H."/>
            <person name="Lao H.I."/>
            <person name="Lewis J."/>
            <person name="Lewis S."/>
            <person name="Lin S.-P."/>
            <person name="Loh P."/>
            <person name="Malaj E."/>
            <person name="Nguyen T."/>
            <person name="Pan H."/>
            <person name="Phan S."/>
            <person name="Qi S."/>
            <person name="Qian Y."/>
            <person name="Ray L."/>
            <person name="Ren Q."/>
            <person name="Shaull S."/>
            <person name="Sloan D."/>
            <person name="Song L."/>
            <person name="Wang Q."/>
            <person name="Wang Y."/>
            <person name="Wang Z."/>
            <person name="White J."/>
            <person name="Willingham D."/>
            <person name="Wu H."/>
            <person name="Yao Z."/>
            <person name="Zhan M."/>
            <person name="Zhang G."/>
            <person name="Chissoe S."/>
            <person name="Murray J."/>
            <person name="Miller N."/>
            <person name="Minx P."/>
            <person name="Fulton R."/>
            <person name="Johnson D."/>
            <person name="Bemis G."/>
            <person name="Bentley D."/>
            <person name="Bradshaw H."/>
            <person name="Bourne S."/>
            <person name="Cordes M."/>
            <person name="Du Z."/>
            <person name="Fulton L."/>
            <person name="Goela D."/>
            <person name="Graves T."/>
            <person name="Hawkins J."/>
            <person name="Hinds K."/>
            <person name="Kemp K."/>
            <person name="Latreille P."/>
            <person name="Layman D."/>
            <person name="Ozersky P."/>
            <person name="Rohlfing T."/>
            <person name="Scheet P."/>
            <person name="Walker C."/>
            <person name="Wamsley A."/>
            <person name="Wohldmann P."/>
            <person name="Pepin K."/>
            <person name="Nelson J."/>
            <person name="Korf I."/>
            <person name="Bedell J.A."/>
            <person name="Hillier L.W."/>
            <person name="Mardis E."/>
            <person name="Waterston R."/>
            <person name="Wilson R."/>
            <person name="Emanuel B.S."/>
            <person name="Shaikh T."/>
            <person name="Kurahashi H."/>
            <person name="Saitta S."/>
            <person name="Budarf M.L."/>
            <person name="McDermid H.E."/>
            <person name="Johnson A."/>
            <person name="Wong A.C.C."/>
            <person name="Morrow B.E."/>
            <person name="Edelmann L."/>
            <person name="Kim U.J."/>
            <person name="Shizuya H."/>
            <person name="Simon M.I."/>
            <person name="Dumanski J.P."/>
            <person name="Peyrard M."/>
            <person name="Kedra D."/>
            <person name="Seroussi E."/>
            <person name="Fransson I."/>
            <person name="Tapia I."/>
            <person name="Bruder C.E."/>
            <person name="O'Brien K.P."/>
            <person name="Wilkinson P."/>
            <person name="Bodenteich A."/>
            <person name="Hartman K."/>
            <person name="Hu X."/>
            <person name="Khan A.S."/>
            <person name="Lane L."/>
            <person name="Tilahun Y."/>
            <person name="Wright H."/>
        </authorList>
    </citation>
    <scope>NUCLEOTIDE SEQUENCE [LARGE SCALE GENOMIC DNA]</scope>
</reference>
<reference key="4">
    <citation type="journal article" date="2004" name="Genome Res.">
        <title>The status, quality, and expansion of the NIH full-length cDNA project: the Mammalian Gene Collection (MGC).</title>
        <authorList>
            <consortium name="The MGC Project Team"/>
        </authorList>
    </citation>
    <scope>NUCLEOTIDE SEQUENCE [LARGE SCALE MRNA]</scope>
    <source>
        <tissue>Brain</tissue>
    </source>
</reference>
<proteinExistence type="evidence at transcript level"/>
<name>DNJB7_HUMAN</name>
<comment type="function">
    <text evidence="1">Probably acts as a co-chaperone.</text>
</comment>
<feature type="chain" id="PRO_0000071027" description="DnaJ homolog subfamily B member 7">
    <location>
        <begin position="1"/>
        <end position="309"/>
    </location>
</feature>
<feature type="domain" description="J" evidence="2">
    <location>
        <begin position="3"/>
        <end position="69"/>
    </location>
</feature>
<feature type="region of interest" description="Disordered" evidence="3">
    <location>
        <begin position="282"/>
        <end position="309"/>
    </location>
</feature>
<feature type="compositionally biased region" description="Basic residues" evidence="3">
    <location>
        <begin position="290"/>
        <end position="309"/>
    </location>
</feature>
<feature type="sequence variant" id="VAR_017779" description="In dbSNP:rs2269619.">
    <original>E</original>
    <variation>A</variation>
    <location>
        <position position="41"/>
    </location>
</feature>
<evidence type="ECO:0000250" key="1"/>
<evidence type="ECO:0000255" key="2">
    <source>
        <dbReference type="PROSITE-ProRule" id="PRU00286"/>
    </source>
</evidence>
<evidence type="ECO:0000256" key="3">
    <source>
        <dbReference type="SAM" id="MobiDB-lite"/>
    </source>
</evidence>
<sequence length="309" mass="35434">MVDYYEVLGLQRYASPEDIKKAYHKVALKWHPDKNPENKEEAERKFKEVAEAYEVLSNDEKRDIYDKYGTEGLNGGGSHFDDECEYGFTFHKPDDVFKEIFHERDPFSFHFFEDSLEDLLNRPGSSYGNRNRDAGYFFSTASEYPIFEKFSSYDTGYTSQGSLGHEGLTSFSSLAFDNSGMDNYISVTTSDKIVNGRNINTKKIIESDQEREAEDNGELTFFLVNSVANEEGFAKECSWRTQSFNNYSPNSHSSKHVSQYTFVDNDEGGISWVTSNRDPPIFSAGVKEGGKRKKKKRKEVQKKSTKRNC</sequence>
<gene>
    <name type="primary">DNAJB7</name>
    <name type="synonym">HSC3</name>
</gene>
<protein>
    <recommendedName>
        <fullName>DnaJ homolog subfamily B member 7</fullName>
    </recommendedName>
</protein>
<accession>Q7Z6W7</accession>
<accession>Q2M220</accession>
<accession>Q5H904</accession>
<accession>Q8WYJ7</accession>